<comment type="function">
    <text evidence="1">May play a role in DNA repair. It seems to be involved in an RecBC-independent recombinational process of DNA repair. It may act with RecF and RecO.</text>
</comment>
<comment type="similarity">
    <text evidence="1">Belongs to the RecR family.</text>
</comment>
<feature type="chain" id="PRO_1000001521" description="Recombination protein RecR">
    <location>
        <begin position="1"/>
        <end position="204"/>
    </location>
</feature>
<feature type="domain" description="Toprim" evidence="1">
    <location>
        <begin position="83"/>
        <end position="181"/>
    </location>
</feature>
<feature type="zinc finger region" description="C4-type" evidence="1">
    <location>
        <begin position="58"/>
        <end position="75"/>
    </location>
</feature>
<sequence>MRFPSVALDTLIDEFAKLPGIGRKTAQRLAMYILHEPKIEAEQLAKALLDVKEKVVRCTICQNITDVGTDPCAICASKARDRTVICVVESPVDMLAFEKTGHYKGLYHVLHGVISPLDGVGPDDIKVRELLARIPVGEASGVREVVLALNPTIEGETTSLYLARLLKPLGIAVTKIARGIPVGAELEYVDEATLSRAMEGRTVV</sequence>
<keyword id="KW-0227">DNA damage</keyword>
<keyword id="KW-0233">DNA recombination</keyword>
<keyword id="KW-0234">DNA repair</keyword>
<keyword id="KW-0479">Metal-binding</keyword>
<keyword id="KW-0862">Zinc</keyword>
<keyword id="KW-0863">Zinc-finger</keyword>
<organism>
    <name type="scientific">Chlorobium chlorochromatii (strain CaD3)</name>
    <dbReference type="NCBI Taxonomy" id="340177"/>
    <lineage>
        <taxon>Bacteria</taxon>
        <taxon>Pseudomonadati</taxon>
        <taxon>Chlorobiota</taxon>
        <taxon>Chlorobiia</taxon>
        <taxon>Chlorobiales</taxon>
        <taxon>Chlorobiaceae</taxon>
        <taxon>Chlorobium/Pelodictyon group</taxon>
        <taxon>Chlorobium</taxon>
    </lineage>
</organism>
<proteinExistence type="inferred from homology"/>
<accession>Q3ARC4</accession>
<evidence type="ECO:0000255" key="1">
    <source>
        <dbReference type="HAMAP-Rule" id="MF_00017"/>
    </source>
</evidence>
<gene>
    <name evidence="1" type="primary">recR</name>
    <name type="ordered locus">Cag_1189</name>
</gene>
<dbReference type="EMBL" id="CP000108">
    <property type="protein sequence ID" value="ABB28451.1"/>
    <property type="molecule type" value="Genomic_DNA"/>
</dbReference>
<dbReference type="SMR" id="Q3ARC4"/>
<dbReference type="STRING" id="340177.Cag_1189"/>
<dbReference type="KEGG" id="cch:Cag_1189"/>
<dbReference type="eggNOG" id="COG0353">
    <property type="taxonomic scope" value="Bacteria"/>
</dbReference>
<dbReference type="HOGENOM" id="CLU_060739_1_0_10"/>
<dbReference type="OrthoDB" id="9802672at2"/>
<dbReference type="GO" id="GO:0003677">
    <property type="term" value="F:DNA binding"/>
    <property type="evidence" value="ECO:0007669"/>
    <property type="project" value="UniProtKB-UniRule"/>
</dbReference>
<dbReference type="GO" id="GO:0008270">
    <property type="term" value="F:zinc ion binding"/>
    <property type="evidence" value="ECO:0007669"/>
    <property type="project" value="UniProtKB-KW"/>
</dbReference>
<dbReference type="GO" id="GO:0006310">
    <property type="term" value="P:DNA recombination"/>
    <property type="evidence" value="ECO:0007669"/>
    <property type="project" value="UniProtKB-UniRule"/>
</dbReference>
<dbReference type="GO" id="GO:0006281">
    <property type="term" value="P:DNA repair"/>
    <property type="evidence" value="ECO:0007669"/>
    <property type="project" value="UniProtKB-UniRule"/>
</dbReference>
<dbReference type="CDD" id="cd01025">
    <property type="entry name" value="TOPRIM_recR"/>
    <property type="match status" value="1"/>
</dbReference>
<dbReference type="Gene3D" id="3.40.1360.10">
    <property type="match status" value="1"/>
</dbReference>
<dbReference type="Gene3D" id="6.10.250.240">
    <property type="match status" value="1"/>
</dbReference>
<dbReference type="Gene3D" id="1.10.8.420">
    <property type="entry name" value="RecR Domain 1"/>
    <property type="match status" value="1"/>
</dbReference>
<dbReference type="HAMAP" id="MF_00017">
    <property type="entry name" value="RecR"/>
    <property type="match status" value="1"/>
</dbReference>
<dbReference type="InterPro" id="IPR000093">
    <property type="entry name" value="DNA_Rcmb_RecR"/>
</dbReference>
<dbReference type="InterPro" id="IPR023627">
    <property type="entry name" value="Rcmb_RecR"/>
</dbReference>
<dbReference type="InterPro" id="IPR006171">
    <property type="entry name" value="TOPRIM_dom"/>
</dbReference>
<dbReference type="InterPro" id="IPR034137">
    <property type="entry name" value="TOPRIM_RecR"/>
</dbReference>
<dbReference type="NCBIfam" id="TIGR00615">
    <property type="entry name" value="recR"/>
    <property type="match status" value="1"/>
</dbReference>
<dbReference type="PANTHER" id="PTHR30446">
    <property type="entry name" value="RECOMBINATION PROTEIN RECR"/>
    <property type="match status" value="1"/>
</dbReference>
<dbReference type="PANTHER" id="PTHR30446:SF0">
    <property type="entry name" value="RECOMBINATION PROTEIN RECR"/>
    <property type="match status" value="1"/>
</dbReference>
<dbReference type="Pfam" id="PF21175">
    <property type="entry name" value="RecR_C"/>
    <property type="match status" value="1"/>
</dbReference>
<dbReference type="Pfam" id="PF21176">
    <property type="entry name" value="RecR_HhH"/>
    <property type="match status" value="1"/>
</dbReference>
<dbReference type="Pfam" id="PF13662">
    <property type="entry name" value="Toprim_4"/>
    <property type="match status" value="1"/>
</dbReference>
<dbReference type="SMART" id="SM00493">
    <property type="entry name" value="TOPRIM"/>
    <property type="match status" value="1"/>
</dbReference>
<dbReference type="SUPFAM" id="SSF111304">
    <property type="entry name" value="Recombination protein RecR"/>
    <property type="match status" value="1"/>
</dbReference>
<dbReference type="PROSITE" id="PS50880">
    <property type="entry name" value="TOPRIM"/>
    <property type="match status" value="1"/>
</dbReference>
<protein>
    <recommendedName>
        <fullName evidence="1">Recombination protein RecR</fullName>
    </recommendedName>
</protein>
<reference key="1">
    <citation type="submission" date="2005-08" db="EMBL/GenBank/DDBJ databases">
        <title>Complete sequence of Chlorobium chlorochromatii CaD3.</title>
        <authorList>
            <consortium name="US DOE Joint Genome Institute"/>
            <person name="Copeland A."/>
            <person name="Lucas S."/>
            <person name="Lapidus A."/>
            <person name="Barry K."/>
            <person name="Detter J.C."/>
            <person name="Glavina T."/>
            <person name="Hammon N."/>
            <person name="Israni S."/>
            <person name="Pitluck S."/>
            <person name="Bryant D."/>
            <person name="Schmutz J."/>
            <person name="Larimer F."/>
            <person name="Land M."/>
            <person name="Kyrpides N."/>
            <person name="Ivanova N."/>
            <person name="Richardson P."/>
        </authorList>
    </citation>
    <scope>NUCLEOTIDE SEQUENCE [LARGE SCALE GENOMIC DNA]</scope>
    <source>
        <strain>CaD3</strain>
    </source>
</reference>
<name>RECR_CHLCH</name>